<organism>
    <name type="scientific">Francisella tularensis subsp. holarctica (strain LVS)</name>
    <dbReference type="NCBI Taxonomy" id="376619"/>
    <lineage>
        <taxon>Bacteria</taxon>
        <taxon>Pseudomonadati</taxon>
        <taxon>Pseudomonadota</taxon>
        <taxon>Gammaproteobacteria</taxon>
        <taxon>Thiotrichales</taxon>
        <taxon>Francisellaceae</taxon>
        <taxon>Francisella</taxon>
    </lineage>
</organism>
<name>TRUA_FRATH</name>
<reference key="1">
    <citation type="submission" date="2006-03" db="EMBL/GenBank/DDBJ databases">
        <title>Complete genome sequence of Francisella tularensis LVS (Live Vaccine Strain).</title>
        <authorList>
            <person name="Chain P."/>
            <person name="Larimer F."/>
            <person name="Land M."/>
            <person name="Stilwagen S."/>
            <person name="Larsson P."/>
            <person name="Bearden S."/>
            <person name="Chu M."/>
            <person name="Oyston P."/>
            <person name="Forsman M."/>
            <person name="Andersson S."/>
            <person name="Lindler L."/>
            <person name="Titball R."/>
            <person name="Garcia E."/>
        </authorList>
    </citation>
    <scope>NUCLEOTIDE SEQUENCE [LARGE SCALE GENOMIC DNA]</scope>
    <source>
        <strain>LVS</strain>
    </source>
</reference>
<proteinExistence type="inferred from homology"/>
<dbReference type="EC" id="5.4.99.12" evidence="1"/>
<dbReference type="EMBL" id="AM233362">
    <property type="protein sequence ID" value="CAJ79507.1"/>
    <property type="molecule type" value="Genomic_DNA"/>
</dbReference>
<dbReference type="RefSeq" id="WP_003015996.1">
    <property type="nucleotide sequence ID" value="NZ_CP009694.1"/>
</dbReference>
<dbReference type="SMR" id="Q2A3D7"/>
<dbReference type="KEGG" id="ftl:FTL_1068"/>
<dbReference type="Proteomes" id="UP000001944">
    <property type="component" value="Chromosome"/>
</dbReference>
<dbReference type="GO" id="GO:0003723">
    <property type="term" value="F:RNA binding"/>
    <property type="evidence" value="ECO:0007669"/>
    <property type="project" value="InterPro"/>
</dbReference>
<dbReference type="GO" id="GO:0160147">
    <property type="term" value="F:tRNA pseudouridine(38-40) synthase activity"/>
    <property type="evidence" value="ECO:0007669"/>
    <property type="project" value="UniProtKB-EC"/>
</dbReference>
<dbReference type="GO" id="GO:0031119">
    <property type="term" value="P:tRNA pseudouridine synthesis"/>
    <property type="evidence" value="ECO:0007669"/>
    <property type="project" value="UniProtKB-UniRule"/>
</dbReference>
<dbReference type="CDD" id="cd02570">
    <property type="entry name" value="PseudoU_synth_EcTruA"/>
    <property type="match status" value="1"/>
</dbReference>
<dbReference type="FunFam" id="3.30.70.580:FF:000001">
    <property type="entry name" value="tRNA pseudouridine synthase A"/>
    <property type="match status" value="1"/>
</dbReference>
<dbReference type="Gene3D" id="3.30.70.660">
    <property type="entry name" value="Pseudouridine synthase I, catalytic domain, C-terminal subdomain"/>
    <property type="match status" value="1"/>
</dbReference>
<dbReference type="Gene3D" id="3.30.70.580">
    <property type="entry name" value="Pseudouridine synthase I, catalytic domain, N-terminal subdomain"/>
    <property type="match status" value="1"/>
</dbReference>
<dbReference type="HAMAP" id="MF_00171">
    <property type="entry name" value="TruA"/>
    <property type="match status" value="1"/>
</dbReference>
<dbReference type="InterPro" id="IPR020103">
    <property type="entry name" value="PsdUridine_synth_cat_dom_sf"/>
</dbReference>
<dbReference type="InterPro" id="IPR001406">
    <property type="entry name" value="PsdUridine_synth_TruA"/>
</dbReference>
<dbReference type="InterPro" id="IPR020097">
    <property type="entry name" value="PsdUridine_synth_TruA_a/b_dom"/>
</dbReference>
<dbReference type="InterPro" id="IPR020095">
    <property type="entry name" value="PsdUridine_synth_TruA_C"/>
</dbReference>
<dbReference type="InterPro" id="IPR020094">
    <property type="entry name" value="TruA/RsuA/RluB/E/F_N"/>
</dbReference>
<dbReference type="NCBIfam" id="TIGR00071">
    <property type="entry name" value="hisT_truA"/>
    <property type="match status" value="1"/>
</dbReference>
<dbReference type="PANTHER" id="PTHR11142">
    <property type="entry name" value="PSEUDOURIDYLATE SYNTHASE"/>
    <property type="match status" value="1"/>
</dbReference>
<dbReference type="PANTHER" id="PTHR11142:SF0">
    <property type="entry name" value="TRNA PSEUDOURIDINE SYNTHASE-LIKE 1"/>
    <property type="match status" value="1"/>
</dbReference>
<dbReference type="Pfam" id="PF01416">
    <property type="entry name" value="PseudoU_synth_1"/>
    <property type="match status" value="2"/>
</dbReference>
<dbReference type="PIRSF" id="PIRSF001430">
    <property type="entry name" value="tRNA_psdUrid_synth"/>
    <property type="match status" value="1"/>
</dbReference>
<dbReference type="SUPFAM" id="SSF55120">
    <property type="entry name" value="Pseudouridine synthase"/>
    <property type="match status" value="1"/>
</dbReference>
<keyword id="KW-0413">Isomerase</keyword>
<keyword id="KW-1185">Reference proteome</keyword>
<keyword id="KW-0819">tRNA processing</keyword>
<sequence>MKNYLLQIEYFGKNYCGWQRQSHSLSVQEELEKALSKIANQNIEVTCAGRTDTGVHATSQIVNFYSNAYRPLSAWQRGVNALLPQDIKILAVQQVDNNFNSRFTAINRTYNYIIYNSATSSPIFAEHCLWENRELDIDKMNQACEYLLGEQDFSSFRSSQCQSNTPFRNIQKAEFIKQGSFIVFEVVGNAFLHHMIRNLVGSLLKVGLGFESPEWIKVVLEAKDRTQAAETAKAHGLYFVGVEYPEFSFKRQIIKLFC</sequence>
<comment type="function">
    <text evidence="1">Formation of pseudouridine at positions 38, 39 and 40 in the anticodon stem and loop of transfer RNAs.</text>
</comment>
<comment type="catalytic activity">
    <reaction evidence="1">
        <text>uridine(38/39/40) in tRNA = pseudouridine(38/39/40) in tRNA</text>
        <dbReference type="Rhea" id="RHEA:22376"/>
        <dbReference type="Rhea" id="RHEA-COMP:10085"/>
        <dbReference type="Rhea" id="RHEA-COMP:10087"/>
        <dbReference type="ChEBI" id="CHEBI:65314"/>
        <dbReference type="ChEBI" id="CHEBI:65315"/>
        <dbReference type="EC" id="5.4.99.12"/>
    </reaction>
</comment>
<comment type="subunit">
    <text evidence="1">Homodimer.</text>
</comment>
<comment type="similarity">
    <text evidence="1">Belongs to the tRNA pseudouridine synthase TruA family.</text>
</comment>
<protein>
    <recommendedName>
        <fullName evidence="1">tRNA pseudouridine synthase A</fullName>
        <ecNumber evidence="1">5.4.99.12</ecNumber>
    </recommendedName>
    <alternativeName>
        <fullName evidence="1">tRNA pseudouridine(38-40) synthase</fullName>
    </alternativeName>
    <alternativeName>
        <fullName evidence="1">tRNA pseudouridylate synthase I</fullName>
    </alternativeName>
    <alternativeName>
        <fullName evidence="1">tRNA-uridine isomerase I</fullName>
    </alternativeName>
</protein>
<feature type="chain" id="PRO_1000017084" description="tRNA pseudouridine synthase A">
    <location>
        <begin position="1"/>
        <end position="258"/>
    </location>
</feature>
<feature type="active site" description="Nucleophile" evidence="1">
    <location>
        <position position="52"/>
    </location>
</feature>
<feature type="binding site" evidence="1">
    <location>
        <position position="110"/>
    </location>
    <ligand>
        <name>substrate</name>
    </ligand>
</feature>
<accession>Q2A3D7</accession>
<gene>
    <name evidence="1" type="primary">truA</name>
    <name type="ordered locus">FTL_1068</name>
</gene>
<evidence type="ECO:0000255" key="1">
    <source>
        <dbReference type="HAMAP-Rule" id="MF_00171"/>
    </source>
</evidence>